<organism>
    <name type="scientific">Methylorubrum extorquens (strain ATCC 14718 / DSM 1338 / JCM 2805 / NCIMB 9133 / AM1)</name>
    <name type="common">Methylobacterium extorquens</name>
    <dbReference type="NCBI Taxonomy" id="272630"/>
    <lineage>
        <taxon>Bacteria</taxon>
        <taxon>Pseudomonadati</taxon>
        <taxon>Pseudomonadota</taxon>
        <taxon>Alphaproteobacteria</taxon>
        <taxon>Hyphomicrobiales</taxon>
        <taxon>Methylobacteriaceae</taxon>
        <taxon>Methylorubrum</taxon>
    </lineage>
</organism>
<name>DHM2_METEA</name>
<reference key="1">
    <citation type="journal article" date="1989" name="Biochem. J.">
        <title>The second subunit of methanol dehydrogenase of Methylobacterium extorquens AM1.</title>
        <authorList>
            <person name="Nunn D.N."/>
            <person name="Day D."/>
            <person name="Anthony C."/>
        </authorList>
    </citation>
    <scope>NUCLEOTIDE SEQUENCE [GENOMIC DNA]</scope>
    <scope>PARTIAL PROTEIN SEQUENCE</scope>
</reference>
<reference key="2">
    <citation type="journal article" date="1988" name="Nucleic Acids Res.">
        <title>The nucleotide sequence and deduced amino acid sequence of the genes for cytochrome cL and a hypothetical second subunit of the methanol dehydrogenase of Methylobacterium AM1.</title>
        <authorList>
            <person name="Nunn D.N."/>
            <person name="Anthony C."/>
        </authorList>
    </citation>
    <scope>NUCLEOTIDE SEQUENCE [GENOMIC DNA]</scope>
</reference>
<reference key="3">
    <citation type="journal article" date="2009" name="PLoS ONE">
        <title>Methylobacterium genome sequences: a reference blueprint to investigate microbial metabolism of C1 compounds from natural and industrial sources.</title>
        <authorList>
            <person name="Vuilleumier S."/>
            <person name="Chistoserdova L."/>
            <person name="Lee M.-C."/>
            <person name="Bringel F."/>
            <person name="Lajus A."/>
            <person name="Zhou Y."/>
            <person name="Gourion B."/>
            <person name="Barbe V."/>
            <person name="Chang J."/>
            <person name="Cruveiller S."/>
            <person name="Dossat C."/>
            <person name="Gillett W."/>
            <person name="Gruffaz C."/>
            <person name="Haugen E."/>
            <person name="Hourcade E."/>
            <person name="Levy R."/>
            <person name="Mangenot S."/>
            <person name="Muller E."/>
            <person name="Nadalig T."/>
            <person name="Pagni M."/>
            <person name="Penny C."/>
            <person name="Peyraud R."/>
            <person name="Robinson D.G."/>
            <person name="Roche D."/>
            <person name="Rouy Z."/>
            <person name="Saenampechek C."/>
            <person name="Salvignol G."/>
            <person name="Vallenet D."/>
            <person name="Wu Z."/>
            <person name="Marx C.J."/>
            <person name="Vorholt J.A."/>
            <person name="Olson M.V."/>
            <person name="Kaul R."/>
            <person name="Weissenbach J."/>
            <person name="Medigue C."/>
            <person name="Lidstrom M.E."/>
        </authorList>
    </citation>
    <scope>NUCLEOTIDE SEQUENCE [LARGE SCALE GENOMIC DNA]</scope>
    <source>
        <strain>ATCC 14718 / DSM 1338 / JCM 2805 / NCIMB 9133 / AM1</strain>
    </source>
</reference>
<reference key="4">
    <citation type="journal article" date="1994" name="Nat. Struct. Biol.">
        <title>The active site of methanol dehydrogenase contains a disulphide bridge between adjacent cysteine residues.</title>
        <authorList>
            <person name="Blake C.C.F."/>
            <person name="Ghosh M."/>
            <person name="Harlos K."/>
            <person name="Avezoux A."/>
            <person name="Anthony C."/>
        </authorList>
    </citation>
    <scope>DISULFIDE BONDS</scope>
</reference>
<reference key="5">
    <citation type="journal article" date="1995" name="Structure">
        <title>The refined structure of the quinoprotein methanol dehydrogenase from Methylobacterium extorquens at 1.94 A.</title>
        <authorList>
            <person name="Ghosh M."/>
            <person name="Anthony C."/>
            <person name="Harlos K."/>
            <person name="Goodwin M.G."/>
            <person name="Blake C."/>
        </authorList>
    </citation>
    <scope>X-RAY CRYSTALLOGRAPHY (1.94 ANGSTROMS)</scope>
</reference>
<reference key="6">
    <citation type="journal article" date="2001" name="Biochemistry">
        <title>Site-directed mutagenesis and X-ray crystallography of the PQQ-containing quinoprotein methanol dehydrogenase and its electron acceptor, cytochrome c(L).</title>
        <authorList>
            <person name="Afolabi P.R."/>
            <person name="Mohammed F."/>
            <person name="Amaratunga K."/>
            <person name="Majekodunmi O."/>
            <person name="Dales S.L."/>
            <person name="Gill R."/>
            <person name="Thompson D."/>
            <person name="Cooper J.B."/>
            <person name="Wood S.P."/>
            <person name="Goodwin P.M."/>
            <person name="Anthony C."/>
        </authorList>
    </citation>
    <scope>X-RAY CRYSTALLOGRAPHY (3.0 ANGSTROMS)</scope>
    <scope>CATALYTIC ACTIVITY</scope>
    <scope>REACTION MECHANISM</scope>
</reference>
<accession>P14775</accession>
<accession>C5AQA6</accession>
<dbReference type="EC" id="1.1.2.7"/>
<dbReference type="EMBL" id="X15792">
    <property type="protein sequence ID" value="CAA33796.1"/>
    <property type="molecule type" value="Genomic_DNA"/>
</dbReference>
<dbReference type="EMBL" id="X07856">
    <property type="protein sequence ID" value="CAA30705.1"/>
    <property type="molecule type" value="Genomic_DNA"/>
</dbReference>
<dbReference type="EMBL" id="CP001510">
    <property type="protein sequence ID" value="ACS42166.1"/>
    <property type="molecule type" value="Genomic_DNA"/>
</dbReference>
<dbReference type="RefSeq" id="WP_003599120.1">
    <property type="nucleotide sequence ID" value="NC_012808.1"/>
</dbReference>
<dbReference type="PDB" id="1H4I">
    <property type="method" value="X-ray"/>
    <property type="resolution" value="1.94 A"/>
    <property type="chains" value="B/D=23-96"/>
</dbReference>
<dbReference type="PDB" id="1H4J">
    <property type="method" value="X-ray"/>
    <property type="resolution" value="3.00 A"/>
    <property type="chains" value="B/D/F/H=23-96"/>
</dbReference>
<dbReference type="PDB" id="1W6S">
    <property type="method" value="X-ray"/>
    <property type="resolution" value="1.20 A"/>
    <property type="chains" value="B/D=23-96"/>
</dbReference>
<dbReference type="PDBsum" id="1H4I"/>
<dbReference type="PDBsum" id="1H4J"/>
<dbReference type="PDBsum" id="1W6S"/>
<dbReference type="SMR" id="P14775"/>
<dbReference type="STRING" id="272630.MexAM1_META1p4535"/>
<dbReference type="KEGG" id="mea:Mex_1p4535"/>
<dbReference type="eggNOG" id="ENOG5032TB9">
    <property type="taxonomic scope" value="Bacteria"/>
</dbReference>
<dbReference type="HOGENOM" id="CLU_2356482_0_0_5"/>
<dbReference type="OrthoDB" id="8686491at2"/>
<dbReference type="BioCyc" id="MetaCyc:MONOMER-3922"/>
<dbReference type="BRENDA" id="1.1.2.7">
    <property type="organism ID" value="3296"/>
</dbReference>
<dbReference type="EvolutionaryTrace" id="P14775"/>
<dbReference type="Proteomes" id="UP000009081">
    <property type="component" value="Chromosome"/>
</dbReference>
<dbReference type="GO" id="GO:0042597">
    <property type="term" value="C:periplasmic space"/>
    <property type="evidence" value="ECO:0007669"/>
    <property type="project" value="UniProtKB-SubCell"/>
</dbReference>
<dbReference type="GO" id="GO:0052933">
    <property type="term" value="F:alcohol dehydrogenase (cytochrome c(L)) activity"/>
    <property type="evidence" value="ECO:0007669"/>
    <property type="project" value="UniProtKB-EC"/>
</dbReference>
<dbReference type="GO" id="GO:0004022">
    <property type="term" value="F:alcohol dehydrogenase (NAD+) activity"/>
    <property type="evidence" value="ECO:0007669"/>
    <property type="project" value="InterPro"/>
</dbReference>
<dbReference type="GO" id="GO:0015946">
    <property type="term" value="P:methanol oxidation"/>
    <property type="evidence" value="ECO:0007669"/>
    <property type="project" value="InterPro"/>
</dbReference>
<dbReference type="Gene3D" id="4.10.160.10">
    <property type="entry name" value="Methanol dehydrogenase, beta subunit"/>
    <property type="match status" value="1"/>
</dbReference>
<dbReference type="InterPro" id="IPR003420">
    <property type="entry name" value="Meth_DH_bsu"/>
</dbReference>
<dbReference type="InterPro" id="IPR036557">
    <property type="entry name" value="Meth_DH_bsu_sf"/>
</dbReference>
<dbReference type="Pfam" id="PF02315">
    <property type="entry name" value="MDH"/>
    <property type="match status" value="1"/>
</dbReference>
<dbReference type="PIRSF" id="PIRSF029163">
    <property type="entry name" value="Meth_DH_beta"/>
    <property type="match status" value="1"/>
</dbReference>
<dbReference type="SUPFAM" id="SSF48666">
    <property type="entry name" value="Methanol dehydrogenase subunit"/>
    <property type="match status" value="1"/>
</dbReference>
<sequence>MKTTLIAAAIVALSGLAAPALAYDGTKCKAAGNCWEPKPGFPEKIAGSKYDPKHDPKELNKQADSIKQMEERNKKRVENFKKTGKFEYDVAKISAN</sequence>
<feature type="signal peptide">
    <location>
        <begin position="1"/>
        <end position="22"/>
    </location>
</feature>
<feature type="chain" id="PRO_0000025569" description="Methanol dehydrogenase [cytochrome c] subunit 2">
    <location>
        <begin position="23"/>
        <end position="96"/>
    </location>
</feature>
<feature type="region of interest" description="Disordered" evidence="1">
    <location>
        <begin position="45"/>
        <end position="75"/>
    </location>
</feature>
<feature type="compositionally biased region" description="Basic and acidic residues" evidence="1">
    <location>
        <begin position="50"/>
        <end position="61"/>
    </location>
</feature>
<feature type="disulfide bond" evidence="3">
    <location>
        <begin position="28"/>
        <end position="34"/>
    </location>
</feature>
<feature type="helix" evidence="5">
    <location>
        <begin position="56"/>
        <end position="59"/>
    </location>
</feature>
<feature type="helix" evidence="5">
    <location>
        <begin position="61"/>
        <end position="83"/>
    </location>
</feature>
<feature type="helix" evidence="5">
    <location>
        <begin position="90"/>
        <end position="92"/>
    </location>
</feature>
<gene>
    <name type="primary">moxI</name>
    <name type="synonym">mxaI</name>
    <name type="ordered locus">MexAM1_META1p4535</name>
</gene>
<comment type="function">
    <text>Catalyzes the oxidation of primary alcohols including methanol.</text>
</comment>
<comment type="catalytic activity">
    <reaction evidence="2">
        <text>2 Fe(III)-[cytochrome cL] + a primary alcohol = 2 Fe(II)-[cytochrome cL] + an aldehyde + 2 H(+)</text>
        <dbReference type="Rhea" id="RHEA:51004"/>
        <dbReference type="Rhea" id="RHEA-COMP:12863"/>
        <dbReference type="Rhea" id="RHEA-COMP:12864"/>
        <dbReference type="ChEBI" id="CHEBI:15378"/>
        <dbReference type="ChEBI" id="CHEBI:15734"/>
        <dbReference type="ChEBI" id="CHEBI:17478"/>
        <dbReference type="ChEBI" id="CHEBI:29033"/>
        <dbReference type="ChEBI" id="CHEBI:29034"/>
        <dbReference type="EC" id="1.1.2.7"/>
    </reaction>
</comment>
<comment type="subunit">
    <text>Heterotetramer composed of 2 alpha and 2 beta subunits.</text>
</comment>
<comment type="subcellular location">
    <subcellularLocation>
        <location>Periplasm</location>
    </subcellularLocation>
</comment>
<comment type="similarity">
    <text evidence="4">Belongs to the methanol dehydrogenase subunit 2 family.</text>
</comment>
<protein>
    <recommendedName>
        <fullName>Methanol dehydrogenase [cytochrome c] subunit 2</fullName>
        <ecNumber>1.1.2.7</ecNumber>
    </recommendedName>
    <alternativeName>
        <fullName>MDH small subunit beta</fullName>
    </alternativeName>
    <alternativeName>
        <fullName>MDH-associated peptide</fullName>
    </alternativeName>
    <alternativeName>
        <fullName>MEDH</fullName>
    </alternativeName>
</protein>
<proteinExistence type="evidence at protein level"/>
<evidence type="ECO:0000256" key="1">
    <source>
        <dbReference type="SAM" id="MobiDB-lite"/>
    </source>
</evidence>
<evidence type="ECO:0000269" key="2">
    <source>
    </source>
</evidence>
<evidence type="ECO:0000269" key="3">
    <source>
    </source>
</evidence>
<evidence type="ECO:0000305" key="4"/>
<evidence type="ECO:0007829" key="5">
    <source>
        <dbReference type="PDB" id="1W6S"/>
    </source>
</evidence>
<keyword id="KW-0002">3D-structure</keyword>
<keyword id="KW-0903">Direct protein sequencing</keyword>
<keyword id="KW-1015">Disulfide bond</keyword>
<keyword id="KW-0485">Methanol utilization</keyword>
<keyword id="KW-0560">Oxidoreductase</keyword>
<keyword id="KW-0574">Periplasm</keyword>
<keyword id="KW-1185">Reference proteome</keyword>
<keyword id="KW-0732">Signal</keyword>